<reference key="1">
    <citation type="journal article" date="2005" name="Proc. Natl. Acad. Sci. U.S.A.">
        <title>Whole genome sequence of Staphylococcus saprophyticus reveals the pathogenesis of uncomplicated urinary tract infection.</title>
        <authorList>
            <person name="Kuroda M."/>
            <person name="Yamashita A."/>
            <person name="Hirakawa H."/>
            <person name="Kumano M."/>
            <person name="Morikawa K."/>
            <person name="Higashide M."/>
            <person name="Maruyama A."/>
            <person name="Inose Y."/>
            <person name="Matoba K."/>
            <person name="Toh H."/>
            <person name="Kuhara S."/>
            <person name="Hattori M."/>
            <person name="Ohta T."/>
        </authorList>
    </citation>
    <scope>NUCLEOTIDE SEQUENCE [LARGE SCALE GENOMIC DNA]</scope>
    <source>
        <strain>ATCC 15305 / DSM 20229 / NCIMB 8711 / NCTC 7292 / S-41</strain>
    </source>
</reference>
<keyword id="KW-0067">ATP-binding</keyword>
<keyword id="KW-0963">Cytoplasm</keyword>
<keyword id="KW-0547">Nucleotide-binding</keyword>
<keyword id="KW-1185">Reference proteome</keyword>
<keyword id="KW-0694">RNA-binding</keyword>
<keyword id="KW-0784">Thiamine biosynthesis</keyword>
<keyword id="KW-0808">Transferase</keyword>
<keyword id="KW-0820">tRNA-binding</keyword>
<feature type="chain" id="PRO_1000074291" description="Probable tRNA sulfurtransferase">
    <location>
        <begin position="1"/>
        <end position="407"/>
    </location>
</feature>
<feature type="domain" description="THUMP" evidence="1">
    <location>
        <begin position="61"/>
        <end position="165"/>
    </location>
</feature>
<feature type="binding site" evidence="1">
    <location>
        <begin position="183"/>
        <end position="184"/>
    </location>
    <ligand>
        <name>ATP</name>
        <dbReference type="ChEBI" id="CHEBI:30616"/>
    </ligand>
</feature>
<feature type="binding site" evidence="1">
    <location>
        <begin position="208"/>
        <end position="209"/>
    </location>
    <ligand>
        <name>ATP</name>
        <dbReference type="ChEBI" id="CHEBI:30616"/>
    </ligand>
</feature>
<feature type="binding site" evidence="1">
    <location>
        <position position="265"/>
    </location>
    <ligand>
        <name>ATP</name>
        <dbReference type="ChEBI" id="CHEBI:30616"/>
    </ligand>
</feature>
<feature type="binding site" evidence="1">
    <location>
        <position position="287"/>
    </location>
    <ligand>
        <name>ATP</name>
        <dbReference type="ChEBI" id="CHEBI:30616"/>
    </ligand>
</feature>
<feature type="binding site" evidence="1">
    <location>
        <position position="296"/>
    </location>
    <ligand>
        <name>ATP</name>
        <dbReference type="ChEBI" id="CHEBI:30616"/>
    </ligand>
</feature>
<accession>Q49YE8</accession>
<comment type="function">
    <text evidence="1">Catalyzes the ATP-dependent transfer of a sulfur to tRNA to produce 4-thiouridine in position 8 of tRNAs, which functions as a near-UV photosensor. Also catalyzes the transfer of sulfur to the sulfur carrier protein ThiS, forming ThiS-thiocarboxylate. This is a step in the synthesis of thiazole, in the thiamine biosynthesis pathway. The sulfur is donated as persulfide by IscS.</text>
</comment>
<comment type="catalytic activity">
    <reaction evidence="1">
        <text>[ThiI sulfur-carrier protein]-S-sulfanyl-L-cysteine + a uridine in tRNA + 2 reduced [2Fe-2S]-[ferredoxin] + ATP + H(+) = [ThiI sulfur-carrier protein]-L-cysteine + a 4-thiouridine in tRNA + 2 oxidized [2Fe-2S]-[ferredoxin] + AMP + diphosphate</text>
        <dbReference type="Rhea" id="RHEA:24176"/>
        <dbReference type="Rhea" id="RHEA-COMP:10000"/>
        <dbReference type="Rhea" id="RHEA-COMP:10001"/>
        <dbReference type="Rhea" id="RHEA-COMP:13337"/>
        <dbReference type="Rhea" id="RHEA-COMP:13338"/>
        <dbReference type="Rhea" id="RHEA-COMP:13339"/>
        <dbReference type="Rhea" id="RHEA-COMP:13340"/>
        <dbReference type="ChEBI" id="CHEBI:15378"/>
        <dbReference type="ChEBI" id="CHEBI:29950"/>
        <dbReference type="ChEBI" id="CHEBI:30616"/>
        <dbReference type="ChEBI" id="CHEBI:33019"/>
        <dbReference type="ChEBI" id="CHEBI:33737"/>
        <dbReference type="ChEBI" id="CHEBI:33738"/>
        <dbReference type="ChEBI" id="CHEBI:61963"/>
        <dbReference type="ChEBI" id="CHEBI:65315"/>
        <dbReference type="ChEBI" id="CHEBI:136798"/>
        <dbReference type="ChEBI" id="CHEBI:456215"/>
        <dbReference type="EC" id="2.8.1.4"/>
    </reaction>
</comment>
<comment type="catalytic activity">
    <reaction evidence="1">
        <text>[ThiS sulfur-carrier protein]-C-terminal Gly-Gly-AMP + S-sulfanyl-L-cysteinyl-[cysteine desulfurase] + AH2 = [ThiS sulfur-carrier protein]-C-terminal-Gly-aminoethanethioate + L-cysteinyl-[cysteine desulfurase] + A + AMP + 2 H(+)</text>
        <dbReference type="Rhea" id="RHEA:43340"/>
        <dbReference type="Rhea" id="RHEA-COMP:12157"/>
        <dbReference type="Rhea" id="RHEA-COMP:12158"/>
        <dbReference type="Rhea" id="RHEA-COMP:12910"/>
        <dbReference type="Rhea" id="RHEA-COMP:19908"/>
        <dbReference type="ChEBI" id="CHEBI:13193"/>
        <dbReference type="ChEBI" id="CHEBI:15378"/>
        <dbReference type="ChEBI" id="CHEBI:17499"/>
        <dbReference type="ChEBI" id="CHEBI:29950"/>
        <dbReference type="ChEBI" id="CHEBI:61963"/>
        <dbReference type="ChEBI" id="CHEBI:90618"/>
        <dbReference type="ChEBI" id="CHEBI:232372"/>
        <dbReference type="ChEBI" id="CHEBI:456215"/>
    </reaction>
</comment>
<comment type="pathway">
    <text evidence="1">Cofactor biosynthesis; thiamine diphosphate biosynthesis.</text>
</comment>
<comment type="subcellular location">
    <subcellularLocation>
        <location evidence="1">Cytoplasm</location>
    </subcellularLocation>
</comment>
<comment type="similarity">
    <text evidence="1">Belongs to the ThiI family.</text>
</comment>
<evidence type="ECO:0000255" key="1">
    <source>
        <dbReference type="HAMAP-Rule" id="MF_00021"/>
    </source>
</evidence>
<organism>
    <name type="scientific">Staphylococcus saprophyticus subsp. saprophyticus (strain ATCC 15305 / DSM 20229 / NCIMB 8711 / NCTC 7292 / S-41)</name>
    <dbReference type="NCBI Taxonomy" id="342451"/>
    <lineage>
        <taxon>Bacteria</taxon>
        <taxon>Bacillati</taxon>
        <taxon>Bacillota</taxon>
        <taxon>Bacilli</taxon>
        <taxon>Bacillales</taxon>
        <taxon>Staphylococcaceae</taxon>
        <taxon>Staphylococcus</taxon>
    </lineage>
</organism>
<dbReference type="EC" id="2.8.1.4" evidence="1"/>
<dbReference type="EMBL" id="AP008934">
    <property type="protein sequence ID" value="BAE18193.1"/>
    <property type="molecule type" value="Genomic_DNA"/>
</dbReference>
<dbReference type="RefSeq" id="WP_011302892.1">
    <property type="nucleotide sequence ID" value="NZ_MTGA01000033.1"/>
</dbReference>
<dbReference type="SMR" id="Q49YE8"/>
<dbReference type="GeneID" id="3615742"/>
<dbReference type="KEGG" id="ssp:SSP1048"/>
<dbReference type="PATRIC" id="fig|342451.11.peg.1047"/>
<dbReference type="eggNOG" id="COG0301">
    <property type="taxonomic scope" value="Bacteria"/>
</dbReference>
<dbReference type="HOGENOM" id="CLU_037952_4_0_9"/>
<dbReference type="OrthoDB" id="9773948at2"/>
<dbReference type="UniPathway" id="UPA00060"/>
<dbReference type="Proteomes" id="UP000006371">
    <property type="component" value="Chromosome"/>
</dbReference>
<dbReference type="GO" id="GO:0005829">
    <property type="term" value="C:cytosol"/>
    <property type="evidence" value="ECO:0007669"/>
    <property type="project" value="TreeGrafter"/>
</dbReference>
<dbReference type="GO" id="GO:0005524">
    <property type="term" value="F:ATP binding"/>
    <property type="evidence" value="ECO:0007669"/>
    <property type="project" value="UniProtKB-UniRule"/>
</dbReference>
<dbReference type="GO" id="GO:0004810">
    <property type="term" value="F:CCA tRNA nucleotidyltransferase activity"/>
    <property type="evidence" value="ECO:0007669"/>
    <property type="project" value="InterPro"/>
</dbReference>
<dbReference type="GO" id="GO:0000049">
    <property type="term" value="F:tRNA binding"/>
    <property type="evidence" value="ECO:0007669"/>
    <property type="project" value="UniProtKB-UniRule"/>
</dbReference>
<dbReference type="GO" id="GO:0140741">
    <property type="term" value="F:tRNA-uracil-4 sulfurtransferase activity"/>
    <property type="evidence" value="ECO:0007669"/>
    <property type="project" value="UniProtKB-EC"/>
</dbReference>
<dbReference type="GO" id="GO:0009228">
    <property type="term" value="P:thiamine biosynthetic process"/>
    <property type="evidence" value="ECO:0007669"/>
    <property type="project" value="UniProtKB-KW"/>
</dbReference>
<dbReference type="GO" id="GO:0009229">
    <property type="term" value="P:thiamine diphosphate biosynthetic process"/>
    <property type="evidence" value="ECO:0007669"/>
    <property type="project" value="UniProtKB-UniRule"/>
</dbReference>
<dbReference type="GO" id="GO:0052837">
    <property type="term" value="P:thiazole biosynthetic process"/>
    <property type="evidence" value="ECO:0007669"/>
    <property type="project" value="TreeGrafter"/>
</dbReference>
<dbReference type="GO" id="GO:0002937">
    <property type="term" value="P:tRNA 4-thiouridine biosynthesis"/>
    <property type="evidence" value="ECO:0007669"/>
    <property type="project" value="TreeGrafter"/>
</dbReference>
<dbReference type="CDD" id="cd01712">
    <property type="entry name" value="PPase_ThiI"/>
    <property type="match status" value="1"/>
</dbReference>
<dbReference type="CDD" id="cd11716">
    <property type="entry name" value="THUMP_ThiI"/>
    <property type="match status" value="1"/>
</dbReference>
<dbReference type="FunFam" id="3.40.50.620:FF:000053">
    <property type="entry name" value="Probable tRNA sulfurtransferase"/>
    <property type="match status" value="1"/>
</dbReference>
<dbReference type="Gene3D" id="3.30.2130.30">
    <property type="match status" value="1"/>
</dbReference>
<dbReference type="Gene3D" id="3.40.50.620">
    <property type="entry name" value="HUPs"/>
    <property type="match status" value="1"/>
</dbReference>
<dbReference type="HAMAP" id="MF_00021">
    <property type="entry name" value="ThiI"/>
    <property type="match status" value="1"/>
</dbReference>
<dbReference type="InterPro" id="IPR014729">
    <property type="entry name" value="Rossmann-like_a/b/a_fold"/>
</dbReference>
<dbReference type="InterPro" id="IPR020536">
    <property type="entry name" value="ThiI_AANH"/>
</dbReference>
<dbReference type="InterPro" id="IPR054173">
    <property type="entry name" value="ThiI_fer"/>
</dbReference>
<dbReference type="InterPro" id="IPR049961">
    <property type="entry name" value="ThiI_N"/>
</dbReference>
<dbReference type="InterPro" id="IPR004114">
    <property type="entry name" value="THUMP_dom"/>
</dbReference>
<dbReference type="InterPro" id="IPR049962">
    <property type="entry name" value="THUMP_ThiI"/>
</dbReference>
<dbReference type="InterPro" id="IPR003720">
    <property type="entry name" value="tRNA_STrfase"/>
</dbReference>
<dbReference type="InterPro" id="IPR050102">
    <property type="entry name" value="tRNA_sulfurtransferase_ThiI"/>
</dbReference>
<dbReference type="NCBIfam" id="TIGR00342">
    <property type="entry name" value="tRNA uracil 4-sulfurtransferase ThiI"/>
    <property type="match status" value="1"/>
</dbReference>
<dbReference type="PANTHER" id="PTHR43209">
    <property type="entry name" value="TRNA SULFURTRANSFERASE"/>
    <property type="match status" value="1"/>
</dbReference>
<dbReference type="PANTHER" id="PTHR43209:SF1">
    <property type="entry name" value="TRNA SULFURTRANSFERASE"/>
    <property type="match status" value="1"/>
</dbReference>
<dbReference type="Pfam" id="PF02568">
    <property type="entry name" value="ThiI"/>
    <property type="match status" value="1"/>
</dbReference>
<dbReference type="Pfam" id="PF22025">
    <property type="entry name" value="ThiI_fer"/>
    <property type="match status" value="1"/>
</dbReference>
<dbReference type="Pfam" id="PF02926">
    <property type="entry name" value="THUMP"/>
    <property type="match status" value="1"/>
</dbReference>
<dbReference type="SMART" id="SM00981">
    <property type="entry name" value="THUMP"/>
    <property type="match status" value="1"/>
</dbReference>
<dbReference type="SUPFAM" id="SSF52402">
    <property type="entry name" value="Adenine nucleotide alpha hydrolases-like"/>
    <property type="match status" value="1"/>
</dbReference>
<dbReference type="SUPFAM" id="SSF143437">
    <property type="entry name" value="THUMP domain-like"/>
    <property type="match status" value="1"/>
</dbReference>
<dbReference type="PROSITE" id="PS51165">
    <property type="entry name" value="THUMP"/>
    <property type="match status" value="1"/>
</dbReference>
<proteinExistence type="inferred from homology"/>
<gene>
    <name evidence="1" type="primary">thiI</name>
    <name type="ordered locus">SSP1048</name>
</gene>
<name>THII_STAS1</name>
<sequence length="407" mass="45599">MIYDHILVRYGELTLKGANRKIFVNKLRSNVKLALMPLQGYTVKANRDRMYIELDEGADIEEMCNRLKKVFGIYSISPVLKIEKTVEAVNELAVRFAKEYADGDTFKIDVKRSDKNFPYDTYALQRTVGGAVLDATNHLSVDVHNPDHNIKVEVRLDAIYMYDQVIEGSGGLPVGTGGKTLLMLSGGIDSPVAGIEVMRRGVTVEAIHFHSPPFTSEKAKEKVIELTRILSGHVGPIKLHIVPFTDLQKQVNKVVHERYTMTSTRRMMMRVADKVVHDIDAHAIVNGENLGQVASQTLKSMYAINHVTSTPVLRPLLTLDKEDIVKKAKEIGTFDVSIQPYEDCCTIFTPKNPITEPDIEKVEKYEIGYDFEPLVQQAVDGIETLLITSDYQSEKDTATQALADDLF</sequence>
<protein>
    <recommendedName>
        <fullName evidence="1">Probable tRNA sulfurtransferase</fullName>
        <ecNumber evidence="1">2.8.1.4</ecNumber>
    </recommendedName>
    <alternativeName>
        <fullName evidence="1">Sulfur carrier protein ThiS sulfurtransferase</fullName>
    </alternativeName>
    <alternativeName>
        <fullName evidence="1">Thiamine biosynthesis protein ThiI</fullName>
    </alternativeName>
    <alternativeName>
        <fullName evidence="1">tRNA 4-thiouridine synthase</fullName>
    </alternativeName>
</protein>